<reference key="1">
    <citation type="journal article" date="1998" name="Nature">
        <title>Deciphering the biology of Mycobacterium tuberculosis from the complete genome sequence.</title>
        <authorList>
            <person name="Cole S.T."/>
            <person name="Brosch R."/>
            <person name="Parkhill J."/>
            <person name="Garnier T."/>
            <person name="Churcher C.M."/>
            <person name="Harris D.E."/>
            <person name="Gordon S.V."/>
            <person name="Eiglmeier K."/>
            <person name="Gas S."/>
            <person name="Barry C.E. III"/>
            <person name="Tekaia F."/>
            <person name="Badcock K."/>
            <person name="Basham D."/>
            <person name="Brown D."/>
            <person name="Chillingworth T."/>
            <person name="Connor R."/>
            <person name="Davies R.M."/>
            <person name="Devlin K."/>
            <person name="Feltwell T."/>
            <person name="Gentles S."/>
            <person name="Hamlin N."/>
            <person name="Holroyd S."/>
            <person name="Hornsby T."/>
            <person name="Jagels K."/>
            <person name="Krogh A."/>
            <person name="McLean J."/>
            <person name="Moule S."/>
            <person name="Murphy L.D."/>
            <person name="Oliver S."/>
            <person name="Osborne J."/>
            <person name="Quail M.A."/>
            <person name="Rajandream M.A."/>
            <person name="Rogers J."/>
            <person name="Rutter S."/>
            <person name="Seeger K."/>
            <person name="Skelton S."/>
            <person name="Squares S."/>
            <person name="Squares R."/>
            <person name="Sulston J.E."/>
            <person name="Taylor K."/>
            <person name="Whitehead S."/>
            <person name="Barrell B.G."/>
        </authorList>
    </citation>
    <scope>NUCLEOTIDE SEQUENCE [LARGE SCALE GENOMIC DNA]</scope>
    <source>
        <strain>ATCC 25618 / H37Rv</strain>
    </source>
</reference>
<reference key="2">
    <citation type="journal article" date="2009" name="Microbiology">
        <title>Experimental determination of translational start sites resolves uncertainties in genomic open reading frame predictions - application to Mycobacterium tuberculosis.</title>
        <authorList>
            <person name="Smollett K.L."/>
            <person name="Fivian-Hughes A.S."/>
            <person name="Smith J.E."/>
            <person name="Chang A."/>
            <person name="Rao T."/>
            <person name="Davis E.O."/>
        </authorList>
    </citation>
    <scope>IDENTIFICATION</scope>
    <scope>OPERON STRUCTURE</scope>
    <source>
        <strain>ATCC 25618 / H37Rv</strain>
    </source>
</reference>
<reference key="3">
    <citation type="journal article" date="2010" name="J. Bacteriol.">
        <title>Analyzing the regulatory role of the HigA antitoxin within Mycobacterium tuberculosis.</title>
        <authorList>
            <person name="Fivian-Hughes A.S."/>
            <person name="Davis E.O."/>
        </authorList>
    </citation>
    <scope>INDUCTION</scope>
    <source>
        <strain>ATCC 25618 / H37Rv</strain>
    </source>
</reference>
<proteinExistence type="evidence at transcript level"/>
<keyword id="KW-1185">Reference proteome</keyword>
<organism>
    <name type="scientific">Mycobacterium tuberculosis (strain ATCC 25618 / H37Rv)</name>
    <dbReference type="NCBI Taxonomy" id="83332"/>
    <lineage>
        <taxon>Bacteria</taxon>
        <taxon>Bacillati</taxon>
        <taxon>Actinomycetota</taxon>
        <taxon>Actinomycetes</taxon>
        <taxon>Mycobacteriales</taxon>
        <taxon>Mycobacteriaceae</taxon>
        <taxon>Mycobacterium</taxon>
        <taxon>Mycobacterium tuberculosis complex</taxon>
    </lineage>
</organism>
<evidence type="ECO:0000256" key="1">
    <source>
        <dbReference type="SAM" id="MobiDB-lite"/>
    </source>
</evidence>
<name>Y954A_MYCTU</name>
<feature type="chain" id="PRO_0000407373" description="Uncharacterized protein Rv1954A">
    <location>
        <begin position="1"/>
        <end position="100"/>
    </location>
</feature>
<feature type="region of interest" description="Disordered" evidence="1">
    <location>
        <begin position="40"/>
        <end position="100"/>
    </location>
</feature>
<gene>
    <name type="ordered locus">Rv1954A</name>
</gene>
<comment type="induction">
    <text>Part of the Rv1954A-higB1-higA1-Rv1957 operon, which is autorepressed by HigA1 (PubMed:20585061).</text>
</comment>
<comment type="miscellaneous">
    <text>This gene is encoded entirely within Rv1954c, on the opposite strand.</text>
</comment>
<dbReference type="EMBL" id="AL123456">
    <property type="protein sequence ID" value="CCP44722.1"/>
    <property type="molecule type" value="Genomic_DNA"/>
</dbReference>
<dbReference type="STRING" id="83332.Rv1954A"/>
<dbReference type="PaxDb" id="83332-Rv1954A"/>
<dbReference type="KEGG" id="mtv:RVBD_1954A"/>
<dbReference type="PATRIC" id="fig|83332.111.peg.2173"/>
<dbReference type="TubercuList" id="Rv1954A"/>
<dbReference type="eggNOG" id="ENOG50336NN">
    <property type="taxonomic scope" value="Bacteria"/>
</dbReference>
<dbReference type="InParanoid" id="P0CV86"/>
<dbReference type="Proteomes" id="UP000001584">
    <property type="component" value="Chromosome"/>
</dbReference>
<sequence length="100" mass="10167">MARGRVVCIGDAGCDCTPGVFRATAGGMPVLVVIESGTGGDQMARKATSPGKPAPTSGQYRPVGGGNEVTVPKGHRLPPSPKPGQKWVNVDPTKNKSGRG</sequence>
<accession>P0CV86</accession>
<accession>L0T869</accession>
<protein>
    <recommendedName>
        <fullName>Uncharacterized protein Rv1954A</fullName>
    </recommendedName>
</protein>